<evidence type="ECO:0000250" key="1">
    <source>
        <dbReference type="UniProtKB" id="Q6IR42"/>
    </source>
</evidence>
<evidence type="ECO:0000255" key="2"/>
<evidence type="ECO:0000255" key="3">
    <source>
        <dbReference type="PROSITE-ProRule" id="PRU00162"/>
    </source>
</evidence>
<evidence type="ECO:0000255" key="4">
    <source>
        <dbReference type="PROSITE-ProRule" id="PRU00454"/>
    </source>
</evidence>
<evidence type="ECO:0000256" key="5">
    <source>
        <dbReference type="SAM" id="MobiDB-lite"/>
    </source>
</evidence>
<evidence type="ECO:0000269" key="6">
    <source>
    </source>
</evidence>
<evidence type="ECO:0000269" key="7">
    <source>
    </source>
</evidence>
<evidence type="ECO:0000269" key="8">
    <source>
    </source>
</evidence>
<evidence type="ECO:0000269" key="9">
    <source>
    </source>
</evidence>
<evidence type="ECO:0000269" key="10">
    <source>
    </source>
</evidence>
<evidence type="ECO:0000303" key="11">
    <source>
    </source>
</evidence>
<evidence type="ECO:0000303" key="12">
    <source>
    </source>
</evidence>
<evidence type="ECO:0000305" key="13"/>
<evidence type="ECO:0007829" key="14">
    <source>
        <dbReference type="PDB" id="2E61"/>
    </source>
</evidence>
<comment type="function">
    <text evidence="1 8 10">Dual histone methylation reader specific for PRDM9-catalyzed histone marks (H3K4me3 and H3K36me3) (PubMed:20826339, PubMed:32744506). Facilitates the repair of PRDM9-induced meiotic double-strand breaks (DSBs) (By similarity). Essential for male fertility and spermatogenesis (By similarity). Required for meiosis prophase I progression in male but not in female germ cells (By similarity).</text>
</comment>
<comment type="interaction">
    <interactant intactId="EBI-16429732">
        <id>Q9H0M4-4</id>
    </interactant>
    <interactant intactId="EBI-11985629">
        <id>Q96JM7-2</id>
        <label>L3MBTL3</label>
    </interactant>
    <organismsDiffer>false</organismsDiffer>
    <experiments>3</experiments>
</comment>
<comment type="interaction">
    <interactant intactId="EBI-16429732">
        <id>Q9H0M4-4</id>
    </interactant>
    <interactant intactId="EBI-16439278">
        <id>Q6FHY5</id>
        <label>MEOX2</label>
    </interactant>
    <organismsDiffer>false</organismsDiffer>
    <experiments>3</experiments>
</comment>
<comment type="subcellular location">
    <subcellularLocation>
        <location evidence="1">Nucleus</location>
    </subcellularLocation>
    <subcellularLocation>
        <location evidence="1">Chromosome</location>
    </subcellularLocation>
</comment>
<comment type="alternative products">
    <event type="alternative splicing"/>
    <isoform>
        <id>Q9H0M4-1</id>
        <name>1</name>
        <sequence type="displayed"/>
    </isoform>
    <isoform>
        <id>Q9H0M4-2</id>
        <name>2</name>
        <sequence type="described" ref="VSP_011432 VSP_011433 VSP_011434 VSP_035590"/>
    </isoform>
    <isoform>
        <id>Q9H0M4-3</id>
        <name>3</name>
        <sequence type="described" ref="VSP_011431 VSP_011432 VSP_011436 VSP_035592"/>
    </isoform>
    <isoform>
        <id>Q9H0M4-4</id>
        <name>4</name>
        <sequence type="described" ref="VSP_011431 VSP_011432 VSP_035591"/>
    </isoform>
    <isoform>
        <id>Q9H0M4-5</id>
        <name>5</name>
        <sequence type="described" ref="VSP_011432 VSP_011436 VSP_035592"/>
    </isoform>
</comment>
<comment type="tissue specificity">
    <text evidence="9 10">Testis.</text>
</comment>
<comment type="domain">
    <text evidence="8">The CW-TYPE zinc finger mediates its binding to trimethylated histone H3K4me3.</text>
</comment>
<comment type="sequence caution" evidence="13">
    <conflict type="frameshift">
        <sequence resource="EMBL-CDS" id="CAB66669"/>
    </conflict>
</comment>
<dbReference type="EMBL" id="AL136735">
    <property type="protein sequence ID" value="CAB66669.1"/>
    <property type="status" value="ALT_FRAME"/>
    <property type="molecule type" value="mRNA"/>
</dbReference>
<dbReference type="EMBL" id="AK000919">
    <property type="protein sequence ID" value="BAA91424.1"/>
    <property type="molecule type" value="mRNA"/>
</dbReference>
<dbReference type="EMBL" id="AK093038">
    <property type="protein sequence ID" value="BAC04028.1"/>
    <property type="molecule type" value="mRNA"/>
</dbReference>
<dbReference type="EMBL" id="AK300745">
    <property type="protein sequence ID" value="BAG62414.1"/>
    <property type="molecule type" value="mRNA"/>
</dbReference>
<dbReference type="EMBL" id="AC005071">
    <property type="status" value="NOT_ANNOTATED_CDS"/>
    <property type="molecule type" value="Genomic_DNA"/>
</dbReference>
<dbReference type="EMBL" id="AC092849">
    <property type="status" value="NOT_ANNOTATED_CDS"/>
    <property type="molecule type" value="Genomic_DNA"/>
</dbReference>
<dbReference type="EMBL" id="CH471091">
    <property type="protein sequence ID" value="EAW76540.1"/>
    <property type="molecule type" value="Genomic_DNA"/>
</dbReference>
<dbReference type="EMBL" id="CH471091">
    <property type="protein sequence ID" value="EAW76541.1"/>
    <property type="molecule type" value="Genomic_DNA"/>
</dbReference>
<dbReference type="EMBL" id="BC002725">
    <property type="protein sequence ID" value="AAH02725.1"/>
    <property type="molecule type" value="mRNA"/>
</dbReference>
<dbReference type="CCDS" id="CCDS43623.1">
    <molecule id="Q9H0M4-1"/>
</dbReference>
<dbReference type="CCDS" id="CCDS59067.1">
    <molecule id="Q9H0M4-5"/>
</dbReference>
<dbReference type="RefSeq" id="NP_001244937.1">
    <molecule id="Q9H0M4-5"/>
    <property type="nucleotide sequence ID" value="NM_001258008.3"/>
</dbReference>
<dbReference type="RefSeq" id="NP_001372949.1">
    <molecule id="Q9H0M4-5"/>
    <property type="nucleotide sequence ID" value="NM_001386020.1"/>
</dbReference>
<dbReference type="RefSeq" id="NP_060454.3">
    <molecule id="Q9H0M4-1"/>
    <property type="nucleotide sequence ID" value="NM_017984.4"/>
</dbReference>
<dbReference type="RefSeq" id="XP_047276508.1">
    <molecule id="Q9H0M4-1"/>
    <property type="nucleotide sequence ID" value="XM_047420552.1"/>
</dbReference>
<dbReference type="RefSeq" id="XP_054214519.1">
    <molecule id="Q9H0M4-1"/>
    <property type="nucleotide sequence ID" value="XM_054358544.1"/>
</dbReference>
<dbReference type="PDB" id="2E61">
    <property type="method" value="NMR"/>
    <property type="chains" value="A=246-307"/>
</dbReference>
<dbReference type="PDB" id="2RR4">
    <property type="method" value="NMR"/>
    <property type="chains" value="A=246-307"/>
</dbReference>
<dbReference type="PDBsum" id="2E61"/>
<dbReference type="PDBsum" id="2RR4"/>
<dbReference type="BMRB" id="Q9H0M4"/>
<dbReference type="SMR" id="Q9H0M4"/>
<dbReference type="BioGRID" id="120381">
    <property type="interactions" value="9"/>
</dbReference>
<dbReference type="DIP" id="DIP-59044N"/>
<dbReference type="FunCoup" id="Q9H0M4">
    <property type="interactions" value="788"/>
</dbReference>
<dbReference type="IntAct" id="Q9H0M4">
    <property type="interactions" value="7"/>
</dbReference>
<dbReference type="MINT" id="Q9H0M4"/>
<dbReference type="STRING" id="9606.ENSP00000381109"/>
<dbReference type="ChEMBL" id="CHEMBL4739863"/>
<dbReference type="GlyCosmos" id="Q9H0M4">
    <property type="glycosylation" value="1 site, 1 glycan"/>
</dbReference>
<dbReference type="GlyGen" id="Q9H0M4">
    <property type="glycosylation" value="2 sites, 1 O-linked glycan (2 sites)"/>
</dbReference>
<dbReference type="iPTMnet" id="Q9H0M4"/>
<dbReference type="PhosphoSitePlus" id="Q9H0M4"/>
<dbReference type="BioMuta" id="ZCWPW1"/>
<dbReference type="DMDM" id="209572701"/>
<dbReference type="MassIVE" id="Q9H0M4"/>
<dbReference type="PaxDb" id="9606-ENSP00000381109"/>
<dbReference type="PeptideAtlas" id="Q9H0M4"/>
<dbReference type="ProteomicsDB" id="5202"/>
<dbReference type="ProteomicsDB" id="80298">
    <molecule id="Q9H0M4-1"/>
</dbReference>
<dbReference type="ProteomicsDB" id="80299">
    <molecule id="Q9H0M4-2"/>
</dbReference>
<dbReference type="ProteomicsDB" id="80300">
    <molecule id="Q9H0M4-3"/>
</dbReference>
<dbReference type="ProteomicsDB" id="80301">
    <molecule id="Q9H0M4-4"/>
</dbReference>
<dbReference type="Antibodypedia" id="8914">
    <property type="antibodies" value="63 antibodies from 16 providers"/>
</dbReference>
<dbReference type="DNASU" id="55063"/>
<dbReference type="Ensembl" id="ENST00000360951.8">
    <molecule id="Q9H0M4-5"/>
    <property type="protein sequence ID" value="ENSP00000354210.4"/>
    <property type="gene ID" value="ENSG00000078487.18"/>
</dbReference>
<dbReference type="Ensembl" id="ENST00000398027.6">
    <molecule id="Q9H0M4-1"/>
    <property type="protein sequence ID" value="ENSP00000381109.2"/>
    <property type="gene ID" value="ENSG00000078487.18"/>
</dbReference>
<dbReference type="Ensembl" id="ENST00000490721.5">
    <molecule id="Q9H0M4-4"/>
    <property type="protein sequence ID" value="ENSP00000419187.1"/>
    <property type="gene ID" value="ENSG00000078487.18"/>
</dbReference>
<dbReference type="GeneID" id="55063"/>
<dbReference type="KEGG" id="hsa:55063"/>
<dbReference type="UCSC" id="uc003uus.4">
    <molecule id="Q9H0M4-1"/>
    <property type="organism name" value="human"/>
</dbReference>
<dbReference type="AGR" id="HGNC:23486"/>
<dbReference type="CTD" id="55063"/>
<dbReference type="DisGeNET" id="55063"/>
<dbReference type="GeneCards" id="ZCWPW1"/>
<dbReference type="HGNC" id="HGNC:23486">
    <property type="gene designation" value="ZCWPW1"/>
</dbReference>
<dbReference type="HPA" id="ENSG00000078487">
    <property type="expression patterns" value="Tissue enriched (testis)"/>
</dbReference>
<dbReference type="MIM" id="618900">
    <property type="type" value="gene"/>
</dbReference>
<dbReference type="neXtProt" id="NX_Q9H0M4"/>
<dbReference type="OpenTargets" id="ENSG00000078487"/>
<dbReference type="PharmGKB" id="PA134913967"/>
<dbReference type="VEuPathDB" id="HostDB:ENSG00000078487"/>
<dbReference type="eggNOG" id="ENOG502QSQZ">
    <property type="taxonomic scope" value="Eukaryota"/>
</dbReference>
<dbReference type="GeneTree" id="ENSGT00560000077278"/>
<dbReference type="HOGENOM" id="CLU_029321_1_0_1"/>
<dbReference type="InParanoid" id="Q9H0M4"/>
<dbReference type="OMA" id="CAQPIRC"/>
<dbReference type="OrthoDB" id="5964980at2759"/>
<dbReference type="PAN-GO" id="Q9H0M4">
    <property type="GO annotations" value="2 GO annotations based on evolutionary models"/>
</dbReference>
<dbReference type="PhylomeDB" id="Q9H0M4"/>
<dbReference type="TreeFam" id="TF336904"/>
<dbReference type="PathwayCommons" id="Q9H0M4"/>
<dbReference type="SignaLink" id="Q9H0M4"/>
<dbReference type="BioGRID-ORCS" id="55063">
    <property type="hits" value="19 hits in 1153 CRISPR screens"/>
</dbReference>
<dbReference type="ChiTaRS" id="ZCWPW1">
    <property type="organism name" value="human"/>
</dbReference>
<dbReference type="EvolutionaryTrace" id="Q9H0M4"/>
<dbReference type="GenomeRNAi" id="55063"/>
<dbReference type="Pharos" id="Q9H0M4">
    <property type="development level" value="Tbio"/>
</dbReference>
<dbReference type="PRO" id="PR:Q9H0M4"/>
<dbReference type="Proteomes" id="UP000005640">
    <property type="component" value="Chromosome 7"/>
</dbReference>
<dbReference type="RNAct" id="Q9H0M4">
    <property type="molecule type" value="protein"/>
</dbReference>
<dbReference type="Bgee" id="ENSG00000078487">
    <property type="expression patterns" value="Expressed in right testis and 131 other cell types or tissues"/>
</dbReference>
<dbReference type="ExpressionAtlas" id="Q9H0M4">
    <property type="expression patterns" value="baseline and differential"/>
</dbReference>
<dbReference type="GO" id="GO:0005694">
    <property type="term" value="C:chromosome"/>
    <property type="evidence" value="ECO:0007669"/>
    <property type="project" value="UniProtKB-SubCell"/>
</dbReference>
<dbReference type="GO" id="GO:0005634">
    <property type="term" value="C:nucleus"/>
    <property type="evidence" value="ECO:0000250"/>
    <property type="project" value="ARUK-UCL"/>
</dbReference>
<dbReference type="GO" id="GO:0140002">
    <property type="term" value="F:histone H3K4me3 reader activity"/>
    <property type="evidence" value="ECO:0000315"/>
    <property type="project" value="UniProtKB"/>
</dbReference>
<dbReference type="GO" id="GO:0140566">
    <property type="term" value="F:histone reader activity"/>
    <property type="evidence" value="ECO:0000314"/>
    <property type="project" value="ARUK-UCL"/>
</dbReference>
<dbReference type="GO" id="GO:0035064">
    <property type="term" value="F:methylated histone binding"/>
    <property type="evidence" value="ECO:0000314"/>
    <property type="project" value="ARUK-UCL"/>
</dbReference>
<dbReference type="GO" id="GO:0008270">
    <property type="term" value="F:zinc ion binding"/>
    <property type="evidence" value="ECO:0007669"/>
    <property type="project" value="UniProtKB-KW"/>
</dbReference>
<dbReference type="GO" id="GO:0030154">
    <property type="term" value="P:cell differentiation"/>
    <property type="evidence" value="ECO:0007669"/>
    <property type="project" value="UniProtKB-KW"/>
</dbReference>
<dbReference type="GO" id="GO:0007129">
    <property type="term" value="P:homologous chromosome pairing at meiosis"/>
    <property type="evidence" value="ECO:0000250"/>
    <property type="project" value="UniProtKB"/>
</dbReference>
<dbReference type="GO" id="GO:0007127">
    <property type="term" value="P:meiosis I"/>
    <property type="evidence" value="ECO:0000250"/>
    <property type="project" value="ARUK-UCL"/>
</dbReference>
<dbReference type="GO" id="GO:0045911">
    <property type="term" value="P:positive regulation of DNA recombination"/>
    <property type="evidence" value="ECO:0000250"/>
    <property type="project" value="ARUK-UCL"/>
</dbReference>
<dbReference type="GO" id="GO:2000781">
    <property type="term" value="P:positive regulation of double-strand break repair"/>
    <property type="evidence" value="ECO:0000250"/>
    <property type="project" value="UniProtKB"/>
</dbReference>
<dbReference type="GO" id="GO:0007283">
    <property type="term" value="P:spermatogenesis"/>
    <property type="evidence" value="ECO:0000250"/>
    <property type="project" value="ARUK-UCL"/>
</dbReference>
<dbReference type="CDD" id="cd20145">
    <property type="entry name" value="PWWP_ZCWPW1"/>
    <property type="match status" value="1"/>
</dbReference>
<dbReference type="Gene3D" id="2.30.30.140">
    <property type="match status" value="1"/>
</dbReference>
<dbReference type="Gene3D" id="3.30.40.100">
    <property type="match status" value="1"/>
</dbReference>
<dbReference type="InterPro" id="IPR000313">
    <property type="entry name" value="PWWP_dom"/>
</dbReference>
<dbReference type="InterPro" id="IPR042778">
    <property type="entry name" value="ZCWPW1/ZCWPW2"/>
</dbReference>
<dbReference type="InterPro" id="IPR011124">
    <property type="entry name" value="Znf_CW"/>
</dbReference>
<dbReference type="PANTHER" id="PTHR15999">
    <property type="entry name" value="ZINC FINGER CW-TYPE PWWP DOMAIN PROTEIN 1"/>
    <property type="match status" value="1"/>
</dbReference>
<dbReference type="PANTHER" id="PTHR15999:SF2">
    <property type="entry name" value="ZINC FINGER CW-TYPE PWWP DOMAIN PROTEIN 1"/>
    <property type="match status" value="1"/>
</dbReference>
<dbReference type="Pfam" id="PF00855">
    <property type="entry name" value="PWWP"/>
    <property type="match status" value="1"/>
</dbReference>
<dbReference type="Pfam" id="PF07496">
    <property type="entry name" value="zf-CW"/>
    <property type="match status" value="1"/>
</dbReference>
<dbReference type="SMART" id="SM00293">
    <property type="entry name" value="PWWP"/>
    <property type="match status" value="1"/>
</dbReference>
<dbReference type="SUPFAM" id="SSF63748">
    <property type="entry name" value="Tudor/PWWP/MBT"/>
    <property type="match status" value="1"/>
</dbReference>
<dbReference type="PROSITE" id="PS50812">
    <property type="entry name" value="PWWP"/>
    <property type="match status" value="1"/>
</dbReference>
<dbReference type="PROSITE" id="PS51050">
    <property type="entry name" value="ZF_CW"/>
    <property type="match status" value="1"/>
</dbReference>
<gene>
    <name type="primary">ZCWPW1</name>
</gene>
<feature type="chain" id="PRO_0000066567" description="Zinc finger CW-type PWWP domain protein 1">
    <location>
        <begin position="1"/>
        <end position="648"/>
    </location>
</feature>
<feature type="domain" description="PWWP" evidence="3">
    <location>
        <begin position="317"/>
        <end position="383"/>
    </location>
</feature>
<feature type="zinc finger region" description="CW-type" evidence="4 8">
    <location>
        <begin position="250"/>
        <end position="304"/>
    </location>
</feature>
<feature type="region of interest" description="Disordered" evidence="5">
    <location>
        <begin position="1"/>
        <end position="103"/>
    </location>
</feature>
<feature type="region of interest" description="Disordered" evidence="5">
    <location>
        <begin position="137"/>
        <end position="237"/>
    </location>
</feature>
<feature type="region of interest" description="Disordered" evidence="5">
    <location>
        <begin position="436"/>
        <end position="648"/>
    </location>
</feature>
<feature type="coiled-coil region" evidence="2">
    <location>
        <begin position="74"/>
        <end position="109"/>
    </location>
</feature>
<feature type="compositionally biased region" description="Basic and acidic residues" evidence="5">
    <location>
        <begin position="61"/>
        <end position="79"/>
    </location>
</feature>
<feature type="compositionally biased region" description="Basic and acidic residues" evidence="5">
    <location>
        <begin position="88"/>
        <end position="97"/>
    </location>
</feature>
<feature type="compositionally biased region" description="Basic residues" evidence="5">
    <location>
        <begin position="194"/>
        <end position="208"/>
    </location>
</feature>
<feature type="compositionally biased region" description="Basic and acidic residues" evidence="5">
    <location>
        <begin position="209"/>
        <end position="237"/>
    </location>
</feature>
<feature type="compositionally biased region" description="Basic and acidic residues" evidence="5">
    <location>
        <begin position="453"/>
        <end position="471"/>
    </location>
</feature>
<feature type="compositionally biased region" description="Basic residues" evidence="5">
    <location>
        <begin position="505"/>
        <end position="516"/>
    </location>
</feature>
<feature type="compositionally biased region" description="Basic and acidic residues" evidence="5">
    <location>
        <begin position="585"/>
        <end position="595"/>
    </location>
</feature>
<feature type="compositionally biased region" description="Acidic residues" evidence="5">
    <location>
        <begin position="604"/>
        <end position="618"/>
    </location>
</feature>
<feature type="binding site" evidence="4">
    <location>
        <position position="259"/>
    </location>
    <ligand>
        <name>Zn(2+)</name>
        <dbReference type="ChEBI" id="CHEBI:29105"/>
    </ligand>
</feature>
<feature type="binding site" evidence="4">
    <location>
        <position position="264"/>
    </location>
    <ligand>
        <name>Zn(2+)</name>
        <dbReference type="ChEBI" id="CHEBI:29105"/>
    </ligand>
</feature>
<feature type="binding site" evidence="4">
    <location>
        <position position="285"/>
    </location>
    <ligand>
        <name>Zn(2+)</name>
        <dbReference type="ChEBI" id="CHEBI:29105"/>
    </ligand>
</feature>
<feature type="binding site" evidence="4">
    <location>
        <position position="296"/>
    </location>
    <ligand>
        <name>Zn(2+)</name>
        <dbReference type="ChEBI" id="CHEBI:29105"/>
    </ligand>
</feature>
<feature type="modified residue" description="Phosphoserine" evidence="1">
    <location>
        <position position="636"/>
    </location>
</feature>
<feature type="splice variant" id="VSP_011431" description="In isoform 3 and isoform 4." evidence="11 12">
    <location>
        <begin position="1"/>
        <end position="121"/>
    </location>
</feature>
<feature type="splice variant" id="VSP_011432" description="In isoform 2, isoform 3, isoform 4 and isoform 5." evidence="11 12">
    <original>H</original>
    <variation>QD</variation>
    <location>
        <position position="211"/>
    </location>
</feature>
<feature type="splice variant" id="VSP_011433" description="In isoform 2." evidence="11">
    <original>T</original>
    <variation>TA</variation>
    <location>
        <position position="289"/>
    </location>
</feature>
<feature type="splice variant" id="VSP_011434" description="In isoform 2." evidence="11">
    <original>LEKKEKEEELEKEE</original>
    <variation>TQNGKERRPREFRF</variation>
    <location>
        <begin position="453"/>
        <end position="466"/>
    </location>
</feature>
<feature type="splice variant" id="VSP_035590" description="In isoform 2." evidence="11">
    <location>
        <begin position="467"/>
        <end position="648"/>
    </location>
</feature>
<feature type="splice variant" id="VSP_011436" description="In isoform 3 and isoform 5." evidence="11">
    <original>DPILPIRKRVKIQTQKTKPRGLGGDAGTADGRGRTLQRKIMKRSLGRKSTAPP</original>
    <variation>ALRKNLKLPRARPWQPAFQREKKLEQCQRTWAYQRVRGPAPHLRKKSPDTGNP</variation>
    <location>
        <begin position="471"/>
        <end position="523"/>
    </location>
</feature>
<feature type="splice variant" id="VSP_035591" description="In isoform 4." evidence="12">
    <location>
        <begin position="491"/>
        <end position="541"/>
    </location>
</feature>
<feature type="splice variant" id="VSP_035592" description="In isoform 3 and isoform 5." evidence="11">
    <location>
        <begin position="524"/>
        <end position="648"/>
    </location>
</feature>
<feature type="sequence variant" id="VAR_019659" description="In dbSNP:rs6465770." evidence="6 7">
    <original>T</original>
    <variation>A</variation>
    <location>
        <position position="153"/>
    </location>
</feature>
<feature type="sequence variant" id="VAR_047050" description="In dbSNP:rs6970350.">
    <original>E</original>
    <variation>K</variation>
    <location>
        <position position="365"/>
    </location>
</feature>
<feature type="mutagenesis site" description="Loss of histone H3K4me3 binding; when associated with R-301; L-302 and P-303." evidence="8">
    <original>W</original>
    <variation>I</variation>
    <location>
        <position position="256"/>
    </location>
</feature>
<feature type="mutagenesis site" description="Reduced histone H3K4me3 binding but complete loss of non-methylated histone H3K4 binding." evidence="8">
    <original>E</original>
    <variation>A</variation>
    <location>
        <position position="300"/>
    </location>
</feature>
<feature type="mutagenesis site" description="Loss of histone H3K4me3 binding; when associated with I-256; L-302 and P-303." evidence="8">
    <original>E</original>
    <variation>R</variation>
    <location>
        <position position="301"/>
    </location>
</feature>
<feature type="mutagenesis site" description="Loss of histone H3K4me3 binding; when associated with I-256; R-301 and P-303." evidence="8">
    <original>T</original>
    <variation>L</variation>
    <location>
        <position position="302"/>
    </location>
</feature>
<feature type="mutagenesis site" description="Reduced histone H3K4me3 binding but no effect on non-methylated histone H3K4 binding." evidence="8">
    <original>W</original>
    <variation>A</variation>
    <location>
        <position position="303"/>
    </location>
</feature>
<feature type="mutagenesis site" description="Silghtly reduced histone H3K4me3 and non-methylated histone H3K4 binding." evidence="8">
    <original>W</original>
    <variation>E</variation>
    <location>
        <position position="303"/>
    </location>
</feature>
<feature type="mutagenesis site" description="Loss of histone H3K4me3 binding; when associated with I-256; R-301 and L-302." evidence="8">
    <original>W</original>
    <variation>P</variation>
    <location>
        <position position="303"/>
    </location>
</feature>
<feature type="strand" evidence="14">
    <location>
        <begin position="247"/>
        <end position="249"/>
    </location>
</feature>
<feature type="strand" evidence="14">
    <location>
        <begin position="256"/>
        <end position="258"/>
    </location>
</feature>
<feature type="turn" evidence="14">
    <location>
        <begin position="262"/>
        <end position="264"/>
    </location>
</feature>
<feature type="strand" evidence="14">
    <location>
        <begin position="267"/>
        <end position="269"/>
    </location>
</feature>
<feature type="turn" evidence="14">
    <location>
        <begin position="276"/>
        <end position="278"/>
    </location>
</feature>
<feature type="helix" evidence="14">
    <location>
        <begin position="285"/>
        <end position="287"/>
    </location>
</feature>
<feature type="helix" evidence="14">
    <location>
        <begin position="291"/>
        <end position="293"/>
    </location>
</feature>
<feature type="strand" evidence="14">
    <location>
        <begin position="295"/>
        <end position="298"/>
    </location>
</feature>
<keyword id="KW-0002">3D-structure</keyword>
<keyword id="KW-0025">Alternative splicing</keyword>
<keyword id="KW-0158">Chromosome</keyword>
<keyword id="KW-0175">Coiled coil</keyword>
<keyword id="KW-0221">Differentiation</keyword>
<keyword id="KW-0479">Metal-binding</keyword>
<keyword id="KW-0539">Nucleus</keyword>
<keyword id="KW-0597">Phosphoprotein</keyword>
<keyword id="KW-1267">Proteomics identification</keyword>
<keyword id="KW-1185">Reference proteome</keyword>
<keyword id="KW-0744">Spermatogenesis</keyword>
<keyword id="KW-0862">Zinc</keyword>
<keyword id="KW-0863">Zinc-finger</keyword>
<proteinExistence type="evidence at protein level"/>
<accession>Q9H0M4</accession>
<accession>A8MVF5</accession>
<accession>B4DUQ2</accession>
<accession>Q8NA98</accession>
<accession>Q9BUD0</accession>
<accession>Q9NWF7</accession>
<organism>
    <name type="scientific">Homo sapiens</name>
    <name type="common">Human</name>
    <dbReference type="NCBI Taxonomy" id="9606"/>
    <lineage>
        <taxon>Eukaryota</taxon>
        <taxon>Metazoa</taxon>
        <taxon>Chordata</taxon>
        <taxon>Craniata</taxon>
        <taxon>Vertebrata</taxon>
        <taxon>Euteleostomi</taxon>
        <taxon>Mammalia</taxon>
        <taxon>Eutheria</taxon>
        <taxon>Euarchontoglires</taxon>
        <taxon>Primates</taxon>
        <taxon>Haplorrhini</taxon>
        <taxon>Catarrhini</taxon>
        <taxon>Hominidae</taxon>
        <taxon>Homo</taxon>
    </lineage>
</organism>
<sequence length="648" mass="72007">MMTTLQNKEECGKGPKRIFAPPAQKSYSLLPCSPNSPKEETPGISSPETEARISLPKASLKKKEEKATMKNVPSREQEKKRKAQINKQAEKKEKEKSSLTNAEFEEIVQIVLQKSLQECLGMGSGLDFAETSCAQPVVSTQSDKEPGITASATDTDNANGEEVPHTQEISVSWEGEAAPEIRTSKLGQPDPAPSKKKSNRLTLSKRKKEAHEKVEKTQGGHEHRQEDRLKKTVQDHSQIRDQQKGEISGFGQCLVWVQCSFPNCGKWRRLCGNIDPSVLPDNWSCDQNTDVQYNRCDIPEETWTGLESDVAYASYIPGSIIWAKQYGYPWWPGMIESDPDLGEYFLFTSHLDSLPSKYHVTFFGETVSRAWIPVNMLKNFQELSLELSVMKKRRNDCSQKLGVALMMAQEAEQISIQERVNLFGFWSRFNGSNSNGERKDLQLSGLNSPGSCLEKKEKEEELEKEEGEKTDPILPIRKRVKIQTQKTKPRGLGGDAGTADGRGRTLQRKIMKRSLGRKSTAPPAPRMGRKEGQGNSDSDQPGPKKKFKAPQSKALAASFSEGKEVRTVPKNLGLSACKGACPSSAKEEPRHREPLTQEAGSVPLEDEASSDLDLEQLMEDVGRELGQSGELQHSNSDGEDFPVALFGK</sequence>
<name>ZCPW1_HUMAN</name>
<reference key="1">
    <citation type="journal article" date="2001" name="Genome Res.">
        <title>Towards a catalog of human genes and proteins: sequencing and analysis of 500 novel complete protein coding human cDNAs.</title>
        <authorList>
            <person name="Wiemann S."/>
            <person name="Weil B."/>
            <person name="Wellenreuther R."/>
            <person name="Gassenhuber J."/>
            <person name="Glassl S."/>
            <person name="Ansorge W."/>
            <person name="Boecher M."/>
            <person name="Bloecker H."/>
            <person name="Bauersachs S."/>
            <person name="Blum H."/>
            <person name="Lauber J."/>
            <person name="Duesterhoeft A."/>
            <person name="Beyer A."/>
            <person name="Koehrer K."/>
            <person name="Strack N."/>
            <person name="Mewes H.-W."/>
            <person name="Ottenwaelder B."/>
            <person name="Obermaier B."/>
            <person name="Tampe J."/>
            <person name="Heubner D."/>
            <person name="Wambutt R."/>
            <person name="Korn B."/>
            <person name="Klein M."/>
            <person name="Poustka A."/>
        </authorList>
    </citation>
    <scope>NUCLEOTIDE SEQUENCE [LARGE SCALE MRNA] (ISOFORM 1)</scope>
    <source>
        <tissue>Testis</tissue>
    </source>
</reference>
<reference key="2">
    <citation type="journal article" date="2004" name="Nat. Genet.">
        <title>Complete sequencing and characterization of 21,243 full-length human cDNAs.</title>
        <authorList>
            <person name="Ota T."/>
            <person name="Suzuki Y."/>
            <person name="Nishikawa T."/>
            <person name="Otsuki T."/>
            <person name="Sugiyama T."/>
            <person name="Irie R."/>
            <person name="Wakamatsu A."/>
            <person name="Hayashi K."/>
            <person name="Sato H."/>
            <person name="Nagai K."/>
            <person name="Kimura K."/>
            <person name="Makita H."/>
            <person name="Sekine M."/>
            <person name="Obayashi M."/>
            <person name="Nishi T."/>
            <person name="Shibahara T."/>
            <person name="Tanaka T."/>
            <person name="Ishii S."/>
            <person name="Yamamoto J."/>
            <person name="Saito K."/>
            <person name="Kawai Y."/>
            <person name="Isono Y."/>
            <person name="Nakamura Y."/>
            <person name="Nagahari K."/>
            <person name="Murakami K."/>
            <person name="Yasuda T."/>
            <person name="Iwayanagi T."/>
            <person name="Wagatsuma M."/>
            <person name="Shiratori A."/>
            <person name="Sudo H."/>
            <person name="Hosoiri T."/>
            <person name="Kaku Y."/>
            <person name="Kodaira H."/>
            <person name="Kondo H."/>
            <person name="Sugawara M."/>
            <person name="Takahashi M."/>
            <person name="Kanda K."/>
            <person name="Yokoi T."/>
            <person name="Furuya T."/>
            <person name="Kikkawa E."/>
            <person name="Omura Y."/>
            <person name="Abe K."/>
            <person name="Kamihara K."/>
            <person name="Katsuta N."/>
            <person name="Sato K."/>
            <person name="Tanikawa M."/>
            <person name="Yamazaki M."/>
            <person name="Ninomiya K."/>
            <person name="Ishibashi T."/>
            <person name="Yamashita H."/>
            <person name="Murakawa K."/>
            <person name="Fujimori K."/>
            <person name="Tanai H."/>
            <person name="Kimata M."/>
            <person name="Watanabe M."/>
            <person name="Hiraoka S."/>
            <person name="Chiba Y."/>
            <person name="Ishida S."/>
            <person name="Ono Y."/>
            <person name="Takiguchi S."/>
            <person name="Watanabe S."/>
            <person name="Yosida M."/>
            <person name="Hotuta T."/>
            <person name="Kusano J."/>
            <person name="Kanehori K."/>
            <person name="Takahashi-Fujii A."/>
            <person name="Hara H."/>
            <person name="Tanase T.-O."/>
            <person name="Nomura Y."/>
            <person name="Togiya S."/>
            <person name="Komai F."/>
            <person name="Hara R."/>
            <person name="Takeuchi K."/>
            <person name="Arita M."/>
            <person name="Imose N."/>
            <person name="Musashino K."/>
            <person name="Yuuki H."/>
            <person name="Oshima A."/>
            <person name="Sasaki N."/>
            <person name="Aotsuka S."/>
            <person name="Yoshikawa Y."/>
            <person name="Matsunawa H."/>
            <person name="Ichihara T."/>
            <person name="Shiohata N."/>
            <person name="Sano S."/>
            <person name="Moriya S."/>
            <person name="Momiyama H."/>
            <person name="Satoh N."/>
            <person name="Takami S."/>
            <person name="Terashima Y."/>
            <person name="Suzuki O."/>
            <person name="Nakagawa S."/>
            <person name="Senoh A."/>
            <person name="Mizoguchi H."/>
            <person name="Goto Y."/>
            <person name="Shimizu F."/>
            <person name="Wakebe H."/>
            <person name="Hishigaki H."/>
            <person name="Watanabe T."/>
            <person name="Sugiyama A."/>
            <person name="Takemoto M."/>
            <person name="Kawakami B."/>
            <person name="Yamazaki M."/>
            <person name="Watanabe K."/>
            <person name="Kumagai A."/>
            <person name="Itakura S."/>
            <person name="Fukuzumi Y."/>
            <person name="Fujimori Y."/>
            <person name="Komiyama M."/>
            <person name="Tashiro H."/>
            <person name="Tanigami A."/>
            <person name="Fujiwara T."/>
            <person name="Ono T."/>
            <person name="Yamada K."/>
            <person name="Fujii Y."/>
            <person name="Ozaki K."/>
            <person name="Hirao M."/>
            <person name="Ohmori Y."/>
            <person name="Kawabata A."/>
            <person name="Hikiji T."/>
            <person name="Kobatake N."/>
            <person name="Inagaki H."/>
            <person name="Ikema Y."/>
            <person name="Okamoto S."/>
            <person name="Okitani R."/>
            <person name="Kawakami T."/>
            <person name="Noguchi S."/>
            <person name="Itoh T."/>
            <person name="Shigeta K."/>
            <person name="Senba T."/>
            <person name="Matsumura K."/>
            <person name="Nakajima Y."/>
            <person name="Mizuno T."/>
            <person name="Morinaga M."/>
            <person name="Sasaki M."/>
            <person name="Togashi T."/>
            <person name="Oyama M."/>
            <person name="Hata H."/>
            <person name="Watanabe M."/>
            <person name="Komatsu T."/>
            <person name="Mizushima-Sugano J."/>
            <person name="Satoh T."/>
            <person name="Shirai Y."/>
            <person name="Takahashi Y."/>
            <person name="Nakagawa K."/>
            <person name="Okumura K."/>
            <person name="Nagase T."/>
            <person name="Nomura N."/>
            <person name="Kikuchi H."/>
            <person name="Masuho Y."/>
            <person name="Yamashita R."/>
            <person name="Nakai K."/>
            <person name="Yada T."/>
            <person name="Nakamura Y."/>
            <person name="Ohara O."/>
            <person name="Isogai T."/>
            <person name="Sugano S."/>
        </authorList>
    </citation>
    <scope>NUCLEOTIDE SEQUENCE [LARGE SCALE MRNA] (ISOFORMS 2; 3 AND 5)</scope>
    <scope>VARIANT ALA-153</scope>
    <source>
        <tissue>Embryo</tissue>
        <tissue>Testis</tissue>
    </source>
</reference>
<reference key="3">
    <citation type="journal article" date="2003" name="Nature">
        <title>The DNA sequence of human chromosome 7.</title>
        <authorList>
            <person name="Hillier L.W."/>
            <person name="Fulton R.S."/>
            <person name="Fulton L.A."/>
            <person name="Graves T.A."/>
            <person name="Pepin K.H."/>
            <person name="Wagner-McPherson C."/>
            <person name="Layman D."/>
            <person name="Maas J."/>
            <person name="Jaeger S."/>
            <person name="Walker R."/>
            <person name="Wylie K."/>
            <person name="Sekhon M."/>
            <person name="Becker M.C."/>
            <person name="O'Laughlin M.D."/>
            <person name="Schaller M.E."/>
            <person name="Fewell G.A."/>
            <person name="Delehaunty K.D."/>
            <person name="Miner T.L."/>
            <person name="Nash W.E."/>
            <person name="Cordes M."/>
            <person name="Du H."/>
            <person name="Sun H."/>
            <person name="Edwards J."/>
            <person name="Bradshaw-Cordum H."/>
            <person name="Ali J."/>
            <person name="Andrews S."/>
            <person name="Isak A."/>
            <person name="Vanbrunt A."/>
            <person name="Nguyen C."/>
            <person name="Du F."/>
            <person name="Lamar B."/>
            <person name="Courtney L."/>
            <person name="Kalicki J."/>
            <person name="Ozersky P."/>
            <person name="Bielicki L."/>
            <person name="Scott K."/>
            <person name="Holmes A."/>
            <person name="Harkins R."/>
            <person name="Harris A."/>
            <person name="Strong C.M."/>
            <person name="Hou S."/>
            <person name="Tomlinson C."/>
            <person name="Dauphin-Kohlberg S."/>
            <person name="Kozlowicz-Reilly A."/>
            <person name="Leonard S."/>
            <person name="Rohlfing T."/>
            <person name="Rock S.M."/>
            <person name="Tin-Wollam A.-M."/>
            <person name="Abbott A."/>
            <person name="Minx P."/>
            <person name="Maupin R."/>
            <person name="Strowmatt C."/>
            <person name="Latreille P."/>
            <person name="Miller N."/>
            <person name="Johnson D."/>
            <person name="Murray J."/>
            <person name="Woessner J.P."/>
            <person name="Wendl M.C."/>
            <person name="Yang S.-P."/>
            <person name="Schultz B.R."/>
            <person name="Wallis J.W."/>
            <person name="Spieth J."/>
            <person name="Bieri T.A."/>
            <person name="Nelson J.O."/>
            <person name="Berkowicz N."/>
            <person name="Wohldmann P.E."/>
            <person name="Cook L.L."/>
            <person name="Hickenbotham M.T."/>
            <person name="Eldred J."/>
            <person name="Williams D."/>
            <person name="Bedell J.A."/>
            <person name="Mardis E.R."/>
            <person name="Clifton S.W."/>
            <person name="Chissoe S.L."/>
            <person name="Marra M.A."/>
            <person name="Raymond C."/>
            <person name="Haugen E."/>
            <person name="Gillett W."/>
            <person name="Zhou Y."/>
            <person name="James R."/>
            <person name="Phelps K."/>
            <person name="Iadanoto S."/>
            <person name="Bubb K."/>
            <person name="Simms E."/>
            <person name="Levy R."/>
            <person name="Clendenning J."/>
            <person name="Kaul R."/>
            <person name="Kent W.J."/>
            <person name="Furey T.S."/>
            <person name="Baertsch R.A."/>
            <person name="Brent M.R."/>
            <person name="Keibler E."/>
            <person name="Flicek P."/>
            <person name="Bork P."/>
            <person name="Suyama M."/>
            <person name="Bailey J.A."/>
            <person name="Portnoy M.E."/>
            <person name="Torrents D."/>
            <person name="Chinwalla A.T."/>
            <person name="Gish W.R."/>
            <person name="Eddy S.R."/>
            <person name="McPherson J.D."/>
            <person name="Olson M.V."/>
            <person name="Eichler E.E."/>
            <person name="Green E.D."/>
            <person name="Waterston R.H."/>
            <person name="Wilson R.K."/>
        </authorList>
    </citation>
    <scope>NUCLEOTIDE SEQUENCE [LARGE SCALE GENOMIC DNA]</scope>
</reference>
<reference key="4">
    <citation type="submission" date="2005-09" db="EMBL/GenBank/DDBJ databases">
        <authorList>
            <person name="Mural R.J."/>
            <person name="Istrail S."/>
            <person name="Sutton G.G."/>
            <person name="Florea L."/>
            <person name="Halpern A.L."/>
            <person name="Mobarry C.M."/>
            <person name="Lippert R."/>
            <person name="Walenz B."/>
            <person name="Shatkay H."/>
            <person name="Dew I."/>
            <person name="Miller J.R."/>
            <person name="Flanigan M.J."/>
            <person name="Edwards N.J."/>
            <person name="Bolanos R."/>
            <person name="Fasulo D."/>
            <person name="Halldorsson B.V."/>
            <person name="Hannenhalli S."/>
            <person name="Turner R."/>
            <person name="Yooseph S."/>
            <person name="Lu F."/>
            <person name="Nusskern D.R."/>
            <person name="Shue B.C."/>
            <person name="Zheng X.H."/>
            <person name="Zhong F."/>
            <person name="Delcher A.L."/>
            <person name="Huson D.H."/>
            <person name="Kravitz S.A."/>
            <person name="Mouchard L."/>
            <person name="Reinert K."/>
            <person name="Remington K.A."/>
            <person name="Clark A.G."/>
            <person name="Waterman M.S."/>
            <person name="Eichler E.E."/>
            <person name="Adams M.D."/>
            <person name="Hunkapiller M.W."/>
            <person name="Myers E.W."/>
            <person name="Venter J.C."/>
        </authorList>
    </citation>
    <scope>NUCLEOTIDE SEQUENCE [LARGE SCALE GENOMIC DNA]</scope>
</reference>
<reference key="5">
    <citation type="journal article" date="2004" name="Genome Res.">
        <title>The status, quality, and expansion of the NIH full-length cDNA project: the Mammalian Gene Collection (MGC).</title>
        <authorList>
            <consortium name="The MGC Project Team"/>
        </authorList>
    </citation>
    <scope>NUCLEOTIDE SEQUENCE [LARGE SCALE MRNA] (ISOFORM 4)</scope>
    <scope>VARIANT ALA-153</scope>
    <source>
        <tissue>Uterus</tissue>
    </source>
</reference>
<reference key="6">
    <citation type="journal article" date="2020" name="Elife">
        <title>Dual histone methyl reader ZCWPW1 facilitates repair of meiotic double strand breaks in male mice.</title>
        <authorList>
            <person name="Mahgoub M."/>
            <person name="Paiano J."/>
            <person name="Bruno M."/>
            <person name="Wu W."/>
            <person name="Pathuri S."/>
            <person name="Zhang X."/>
            <person name="Ralls S."/>
            <person name="Cheng X."/>
            <person name="Nussenzweig A."/>
            <person name="Macfarlan T.S."/>
        </authorList>
    </citation>
    <scope>TISSUE SPECIFICITY</scope>
</reference>
<reference key="7">
    <citation type="journal article" date="2020" name="Elife">
        <title>ZCWPW1 is recruited to recombination hotspots by PRDM9, and is essential for meiotic double strand break repair.</title>
        <authorList>
            <person name="Wells D."/>
            <person name="Bitoun E."/>
            <person name="Moralli D."/>
            <person name="Zhang G."/>
            <person name="Hinch A."/>
            <person name="Jankowska J."/>
            <person name="Donnelly P."/>
            <person name="Green C."/>
            <person name="Myers S.R."/>
        </authorList>
    </citation>
    <scope>FUNCTION</scope>
    <scope>TISSUE SPECIFICITY</scope>
</reference>
<reference key="8">
    <citation type="submission" date="2007-06" db="PDB data bank">
        <title>Solution structure of the ZF-CW domain in zinc finger CW-type PWWP domain protein 1.</title>
        <authorList>
            <consortium name="RIKEN structural genomics initiative (RSGI)"/>
        </authorList>
    </citation>
    <scope>STRUCTURE BY NMR OF 245-307</scope>
</reference>
<reference key="9">
    <citation type="journal article" date="2010" name="Structure">
        <title>Structural insight into the zinc finger CW domain as a histone modification reader.</title>
        <authorList>
            <person name="He F."/>
            <person name="Umehara T."/>
            <person name="Saito K."/>
            <person name="Harada T."/>
            <person name="Watanabe S."/>
            <person name="Yabuki T."/>
            <person name="Kigawa T."/>
            <person name="Takahashi M."/>
            <person name="Kuwasako K."/>
            <person name="Tsuda K."/>
            <person name="Matsuda T."/>
            <person name="Aoki M."/>
            <person name="Seki E."/>
            <person name="Kobayashi N."/>
            <person name="Guentert P."/>
            <person name="Yokoyama S."/>
            <person name="Muto Y."/>
        </authorList>
    </citation>
    <scope>STRUCTURE BY NMR OF 246-307</scope>
    <scope>DOMAIN CW-TYPE ZINC FINGER</scope>
    <scope>FUNCTION</scope>
    <scope>MUTAGENESIS OF TRP-256; GLU-300; GLU-301; THR-302 AND TRP-303</scope>
</reference>
<protein>
    <recommendedName>
        <fullName>Zinc finger CW-type PWWP domain protein 1</fullName>
    </recommendedName>
</protein>